<gene>
    <name evidence="4" type="primary">NLP2</name>
    <name evidence="5" type="synonym">NIT1</name>
    <name evidence="7" type="ordered locus">At4g08790</name>
    <name evidence="8" type="ORF">T32A17.100</name>
</gene>
<protein>
    <recommendedName>
        <fullName evidence="6">Deaminated glutathione amidase, chloroplastic/cytosolic</fullName>
        <shortName evidence="5">dGSH amidase</shortName>
        <ecNumber evidence="3">3.5.1.128</ecNumber>
    </recommendedName>
    <alternativeName>
        <fullName evidence="4">Nitrilase-like protein 2</fullName>
    </alternativeName>
    <alternativeName>
        <fullName evidence="5">Protein nitrilase 1 homolog</fullName>
        <shortName evidence="5">AtNit1</shortName>
        <shortName evidence="5">Protein Nit1 homolog</shortName>
    </alternativeName>
</protein>
<evidence type="ECO:0000255" key="1"/>
<evidence type="ECO:0000255" key="2">
    <source>
        <dbReference type="PROSITE-ProRule" id="PRU00054"/>
    </source>
</evidence>
<evidence type="ECO:0000269" key="3">
    <source>
    </source>
</evidence>
<evidence type="ECO:0000303" key="4">
    <source>
    </source>
</evidence>
<evidence type="ECO:0000303" key="5">
    <source>
    </source>
</evidence>
<evidence type="ECO:0000305" key="6"/>
<evidence type="ECO:0000312" key="7">
    <source>
        <dbReference type="Araport" id="AT4G08790"/>
    </source>
</evidence>
<evidence type="ECO:0000312" key="8">
    <source>
        <dbReference type="EMBL" id="CAB82115.1"/>
    </source>
</evidence>
<organism>
    <name type="scientific">Arabidopsis thaliana</name>
    <name type="common">Mouse-ear cress</name>
    <dbReference type="NCBI Taxonomy" id="3702"/>
    <lineage>
        <taxon>Eukaryota</taxon>
        <taxon>Viridiplantae</taxon>
        <taxon>Streptophyta</taxon>
        <taxon>Embryophyta</taxon>
        <taxon>Tracheophyta</taxon>
        <taxon>Spermatophyta</taxon>
        <taxon>Magnoliopsida</taxon>
        <taxon>eudicotyledons</taxon>
        <taxon>Gunneridae</taxon>
        <taxon>Pentapetalae</taxon>
        <taxon>rosids</taxon>
        <taxon>malvids</taxon>
        <taxon>Brassicales</taxon>
        <taxon>Brassicaceae</taxon>
        <taxon>Camelineae</taxon>
        <taxon>Arabidopsis</taxon>
    </lineage>
</organism>
<comment type="function">
    <text evidence="3">Catalyzes the hydrolysis of the amide bond in N-(4-oxoglutarate)-L-cysteinylglycine (deaminated glutathione), a metabolite repair reaction to dispose of the harmful deaminated glutathione (PubMed:30692244). Possesses amidase activity toward deaminated ophthalmate in vitro (PubMed:30692244).</text>
</comment>
<comment type="catalytic activity">
    <reaction evidence="3">
        <text>N-(4-oxoglutaryl)-L-cysteinylglycine + H2O = L-cysteinylglycine + 2-oxoglutarate</text>
        <dbReference type="Rhea" id="RHEA:54532"/>
        <dbReference type="ChEBI" id="CHEBI:15377"/>
        <dbReference type="ChEBI" id="CHEBI:16810"/>
        <dbReference type="ChEBI" id="CHEBI:61694"/>
        <dbReference type="ChEBI" id="CHEBI:138256"/>
        <dbReference type="EC" id="3.5.1.128"/>
    </reaction>
    <physiologicalReaction direction="left-to-right" evidence="3">
        <dbReference type="Rhea" id="RHEA:54533"/>
    </physiologicalReaction>
</comment>
<comment type="catalytic activity">
    <reaction evidence="3">
        <text>N-(4-carboxy-4-oxobutanoyl)-L-ethylglycylglycine + H2O = N-(2-aminobutanoyl)glycine + 2-oxoglutarate</text>
        <dbReference type="Rhea" id="RHEA:17125"/>
        <dbReference type="ChEBI" id="CHEBI:15377"/>
        <dbReference type="ChEBI" id="CHEBI:16810"/>
        <dbReference type="ChEBI" id="CHEBI:144697"/>
        <dbReference type="ChEBI" id="CHEBI:144699"/>
    </reaction>
    <physiologicalReaction direction="left-to-right" evidence="3">
        <dbReference type="Rhea" id="RHEA:17126"/>
    </physiologicalReaction>
</comment>
<comment type="biophysicochemical properties">
    <kinetics>
        <KM evidence="3">35 uM for N-(4-oxoglutarate)-L-cysteinylglycine</KM>
        <KM evidence="3">6.7 uM for ophthalmate</KM>
        <Vmax evidence="3">7.9 umol/min/mg enzyme with N-(4-oxoglutarate)-L-cysteinylglycine as substrate</Vmax>
        <Vmax evidence="3">5.6 umol/min/mg enzyme with ophthalmate as substrate</Vmax>
        <text evidence="3">kcat is 4.2 sec(-1) with N-(4-oxoglutarate)-L-cysteinylglycine as substrate (PubMed:30692244). kcat is 3.0 sec(-1) with ophthalmate as substrate (PubMed:30692244).</text>
    </kinetics>
</comment>
<comment type="subcellular location">
    <molecule>Isoform 1</molecule>
    <subcellularLocation>
        <location evidence="3">Plastid</location>
        <location evidence="3">Chloroplast</location>
    </subcellularLocation>
</comment>
<comment type="subcellular location">
    <molecule>Isoform 2</molecule>
    <subcellularLocation>
        <location evidence="3">Cytoplasm</location>
    </subcellularLocation>
</comment>
<comment type="alternative products">
    <event type="alternative initiation"/>
    <isoform>
        <id>Q94JV5-1</id>
        <name evidence="6">1</name>
        <name>Full-length</name>
        <name evidence="5">FL</name>
        <sequence type="displayed"/>
    </isoform>
    <isoform>
        <id>Q94JV5-2</id>
        <name evidence="6">2</name>
        <name>Truncated</name>
        <name evidence="5">Tr</name>
        <sequence type="described" ref="VSP_060389"/>
    </isoform>
</comment>
<comment type="disruption phenotype">
    <text evidence="3">No visible phenotype under normal growth conditions, but the accumuluation of N-(4-oxoglutarate)-L-cysteinylglycine (deaminated glutathione) in mutant plants is up to 70-fold higher than in the wild type.</text>
</comment>
<comment type="similarity">
    <text evidence="6">Belongs to the nitrilase superfamily. NIT1/NIT2 family.</text>
</comment>
<comment type="sequence caution" evidence="6">
    <conflict type="erroneous gene model prediction">
        <sequence resource="EMBL-CDS" id="CAB78004"/>
    </conflict>
</comment>
<comment type="sequence caution" evidence="6">
    <conflict type="erroneous gene model prediction">
        <sequence resource="EMBL-CDS" id="CAB82115"/>
    </conflict>
</comment>
<keyword id="KW-0024">Alternative initiation</keyword>
<keyword id="KW-0150">Chloroplast</keyword>
<keyword id="KW-0963">Cytoplasm</keyword>
<keyword id="KW-0378">Hydrolase</keyword>
<keyword id="KW-0934">Plastid</keyword>
<keyword id="KW-1185">Reference proteome</keyword>
<keyword id="KW-0809">Transit peptide</keyword>
<sequence length="307" mass="33971">MNAYSVSLDFTKPSLFTRITLSSQIPLTMATTVNKTVRVAAAQMTSVNDLMTNFATCSRLVQEAALAGAKLICFPENFSFVGDKEGESVKIAEPLDGPVMERYCSLARDSNIWLSLGGFQERFDDTHLCNTHVVIDDAGMIRDTYQKMHLFDVDVPGGSSYKESSFTVPGTKIVSVDSPVGRLGLTVCYDLRFPKIYQQLRFEQKAQVLLVPSAFTKVTGEAHWEILLRARAIETQCYVIAAAQAGKHNEKRESYGDTLIIDPWGTVVGRLPDRVSTGIVVADIDFSLIDSVRTKMPIDKQRVSIDL</sequence>
<proteinExistence type="evidence at protein level"/>
<feature type="transit peptide" description="Chloroplast" evidence="1">
    <location>
        <begin position="1"/>
        <end position="36"/>
    </location>
</feature>
<feature type="chain" id="PRO_0000426705" description="Deaminated glutathione amidase, chloroplastic/cytosolic">
    <location>
        <begin position="37"/>
        <end position="307"/>
    </location>
</feature>
<feature type="domain" description="CN hydrolase" evidence="2">
    <location>
        <begin position="37"/>
        <end position="286"/>
    </location>
</feature>
<feature type="active site" description="Proton acceptor" evidence="2">
    <location>
        <position position="76"/>
    </location>
</feature>
<feature type="active site" description="Proton donor" evidence="2">
    <location>
        <position position="147"/>
    </location>
</feature>
<feature type="active site" description="Nucleophile" evidence="2">
    <location>
        <position position="188"/>
    </location>
</feature>
<feature type="splice variant" id="VSP_060389" description="In isoform 2." evidence="3">
    <location>
        <begin position="1"/>
        <end position="28"/>
    </location>
</feature>
<feature type="mutagenesis site" description="No cytoplasmic localization." evidence="3">
    <original>M</original>
    <variation>L</variation>
    <location>
        <position position="29"/>
    </location>
</feature>
<name>NILP2_ARATH</name>
<accession>Q94JV5</accession>
<accession>Q9LE50</accession>
<dbReference type="EC" id="3.5.1.128" evidence="3"/>
<dbReference type="EMBL" id="AL161512">
    <property type="protein sequence ID" value="CAB78004.1"/>
    <property type="status" value="ALT_SEQ"/>
    <property type="molecule type" value="Genomic_DNA"/>
</dbReference>
<dbReference type="EMBL" id="AL161813">
    <property type="protein sequence ID" value="CAB82115.1"/>
    <property type="status" value="ALT_SEQ"/>
    <property type="molecule type" value="Genomic_DNA"/>
</dbReference>
<dbReference type="EMBL" id="CP002687">
    <property type="protein sequence ID" value="AEE82678.1"/>
    <property type="molecule type" value="Genomic_DNA"/>
</dbReference>
<dbReference type="EMBL" id="AF372904">
    <property type="protein sequence ID" value="AAK49620.1"/>
    <property type="molecule type" value="mRNA"/>
</dbReference>
<dbReference type="EMBL" id="AY133544">
    <property type="protein sequence ID" value="AAM91374.1"/>
    <property type="molecule type" value="mRNA"/>
</dbReference>
<dbReference type="PIR" id="D85088">
    <property type="entry name" value="D85088"/>
</dbReference>
<dbReference type="RefSeq" id="NP_567340.1">
    <molecule id="Q94JV5-1"/>
    <property type="nucleotide sequence ID" value="NM_116949.4"/>
</dbReference>
<dbReference type="SMR" id="Q94JV5"/>
<dbReference type="BioGRID" id="11748">
    <property type="interactions" value="1"/>
</dbReference>
<dbReference type="FunCoup" id="Q94JV5">
    <property type="interactions" value="2201"/>
</dbReference>
<dbReference type="IntAct" id="Q94JV5">
    <property type="interactions" value="1"/>
</dbReference>
<dbReference type="STRING" id="3702.Q94JV5"/>
<dbReference type="iPTMnet" id="Q94JV5"/>
<dbReference type="PaxDb" id="3702-AT4G08790.1"/>
<dbReference type="ProMEX" id="Q94JV5"/>
<dbReference type="ProteomicsDB" id="251171">
    <molecule id="Q94JV5-1"/>
</dbReference>
<dbReference type="EnsemblPlants" id="AT4G08790.1">
    <molecule id="Q94JV5-1"/>
    <property type="protein sequence ID" value="AT4G08790.1"/>
    <property type="gene ID" value="AT4G08790"/>
</dbReference>
<dbReference type="GeneID" id="826449"/>
<dbReference type="Gramene" id="AT4G08790.1">
    <molecule id="Q94JV5-1"/>
    <property type="protein sequence ID" value="AT4G08790.1"/>
    <property type="gene ID" value="AT4G08790"/>
</dbReference>
<dbReference type="KEGG" id="ath:AT4G08790"/>
<dbReference type="Araport" id="AT4G08790"/>
<dbReference type="TAIR" id="AT4G08790">
    <property type="gene designation" value="NIT1"/>
</dbReference>
<dbReference type="eggNOG" id="KOG0807">
    <property type="taxonomic scope" value="Eukaryota"/>
</dbReference>
<dbReference type="HOGENOM" id="CLU_030130_1_2_1"/>
<dbReference type="InParanoid" id="Q94JV5"/>
<dbReference type="OMA" id="MRVAVCQ"/>
<dbReference type="PhylomeDB" id="Q94JV5"/>
<dbReference type="BioCyc" id="ARA:AT4G08790-MONOMER"/>
<dbReference type="BRENDA" id="3.5.1.128">
    <property type="organism ID" value="399"/>
</dbReference>
<dbReference type="PRO" id="PR:Q94JV5"/>
<dbReference type="Proteomes" id="UP000006548">
    <property type="component" value="Chromosome 4"/>
</dbReference>
<dbReference type="ExpressionAtlas" id="Q94JV5">
    <property type="expression patterns" value="baseline and differential"/>
</dbReference>
<dbReference type="GO" id="GO:0009507">
    <property type="term" value="C:chloroplast"/>
    <property type="evidence" value="ECO:0000314"/>
    <property type="project" value="TAIR"/>
</dbReference>
<dbReference type="GO" id="GO:0005737">
    <property type="term" value="C:cytoplasm"/>
    <property type="evidence" value="ECO:0000314"/>
    <property type="project" value="TAIR"/>
</dbReference>
<dbReference type="GO" id="GO:0009536">
    <property type="term" value="C:plastid"/>
    <property type="evidence" value="ECO:0007005"/>
    <property type="project" value="TAIR"/>
</dbReference>
<dbReference type="GO" id="GO:0050406">
    <property type="term" value="F:[acetyl-CoA carboxylase]-phosphatase activity"/>
    <property type="evidence" value="ECO:0007669"/>
    <property type="project" value="RHEA"/>
</dbReference>
<dbReference type="GO" id="GO:0110050">
    <property type="term" value="F:deaminated glutathione amidase activity"/>
    <property type="evidence" value="ECO:0000314"/>
    <property type="project" value="TAIR"/>
</dbReference>
<dbReference type="GO" id="GO:0110051">
    <property type="term" value="P:metabolite repair"/>
    <property type="evidence" value="ECO:0000314"/>
    <property type="project" value="TAIR"/>
</dbReference>
<dbReference type="CDD" id="cd07572">
    <property type="entry name" value="nit"/>
    <property type="match status" value="1"/>
</dbReference>
<dbReference type="FunFam" id="3.60.110.10:FF:000005">
    <property type="entry name" value="nitrilase homolog 1 isoform X1"/>
    <property type="match status" value="1"/>
</dbReference>
<dbReference type="Gene3D" id="3.60.110.10">
    <property type="entry name" value="Carbon-nitrogen hydrolase"/>
    <property type="match status" value="1"/>
</dbReference>
<dbReference type="InterPro" id="IPR003010">
    <property type="entry name" value="C-N_Hydrolase"/>
</dbReference>
<dbReference type="InterPro" id="IPR036526">
    <property type="entry name" value="C-N_Hydrolase_sf"/>
</dbReference>
<dbReference type="InterPro" id="IPR045254">
    <property type="entry name" value="Nit1/2_C-N_Hydrolase"/>
</dbReference>
<dbReference type="PANTHER" id="PTHR23088:SF27">
    <property type="entry name" value="DEAMINATED GLUTATHIONE AMIDASE"/>
    <property type="match status" value="1"/>
</dbReference>
<dbReference type="PANTHER" id="PTHR23088">
    <property type="entry name" value="NITRILASE-RELATED"/>
    <property type="match status" value="1"/>
</dbReference>
<dbReference type="Pfam" id="PF00795">
    <property type="entry name" value="CN_hydrolase"/>
    <property type="match status" value="1"/>
</dbReference>
<dbReference type="SUPFAM" id="SSF56317">
    <property type="entry name" value="Carbon-nitrogen hydrolase"/>
    <property type="match status" value="1"/>
</dbReference>
<dbReference type="PROSITE" id="PS50263">
    <property type="entry name" value="CN_HYDROLASE"/>
    <property type="match status" value="1"/>
</dbReference>
<reference key="1">
    <citation type="journal article" date="1999" name="Nature">
        <title>Sequence and analysis of chromosome 4 of the plant Arabidopsis thaliana.</title>
        <authorList>
            <person name="Mayer K.F.X."/>
            <person name="Schueller C."/>
            <person name="Wambutt R."/>
            <person name="Murphy G."/>
            <person name="Volckaert G."/>
            <person name="Pohl T."/>
            <person name="Duesterhoeft A."/>
            <person name="Stiekema W."/>
            <person name="Entian K.-D."/>
            <person name="Terryn N."/>
            <person name="Harris B."/>
            <person name="Ansorge W."/>
            <person name="Brandt P."/>
            <person name="Grivell L.A."/>
            <person name="Rieger M."/>
            <person name="Weichselgartner M."/>
            <person name="de Simone V."/>
            <person name="Obermaier B."/>
            <person name="Mache R."/>
            <person name="Mueller M."/>
            <person name="Kreis M."/>
            <person name="Delseny M."/>
            <person name="Puigdomenech P."/>
            <person name="Watson M."/>
            <person name="Schmidtheini T."/>
            <person name="Reichert B."/>
            <person name="Portetelle D."/>
            <person name="Perez-Alonso M."/>
            <person name="Boutry M."/>
            <person name="Bancroft I."/>
            <person name="Vos P."/>
            <person name="Hoheisel J."/>
            <person name="Zimmermann W."/>
            <person name="Wedler H."/>
            <person name="Ridley P."/>
            <person name="Langham S.-A."/>
            <person name="McCullagh B."/>
            <person name="Bilham L."/>
            <person name="Robben J."/>
            <person name="van der Schueren J."/>
            <person name="Grymonprez B."/>
            <person name="Chuang Y.-J."/>
            <person name="Vandenbussche F."/>
            <person name="Braeken M."/>
            <person name="Weltjens I."/>
            <person name="Voet M."/>
            <person name="Bastiaens I."/>
            <person name="Aert R."/>
            <person name="Defoor E."/>
            <person name="Weitzenegger T."/>
            <person name="Bothe G."/>
            <person name="Ramsperger U."/>
            <person name="Hilbert H."/>
            <person name="Braun M."/>
            <person name="Holzer E."/>
            <person name="Brandt A."/>
            <person name="Peters S."/>
            <person name="van Staveren M."/>
            <person name="Dirkse W."/>
            <person name="Mooijman P."/>
            <person name="Klein Lankhorst R."/>
            <person name="Rose M."/>
            <person name="Hauf J."/>
            <person name="Koetter P."/>
            <person name="Berneiser S."/>
            <person name="Hempel S."/>
            <person name="Feldpausch M."/>
            <person name="Lamberth S."/>
            <person name="Van den Daele H."/>
            <person name="De Keyser A."/>
            <person name="Buysshaert C."/>
            <person name="Gielen J."/>
            <person name="Villarroel R."/>
            <person name="De Clercq R."/>
            <person name="van Montagu M."/>
            <person name="Rogers J."/>
            <person name="Cronin A."/>
            <person name="Quail M.A."/>
            <person name="Bray-Allen S."/>
            <person name="Clark L."/>
            <person name="Doggett J."/>
            <person name="Hall S."/>
            <person name="Kay M."/>
            <person name="Lennard N."/>
            <person name="McLay K."/>
            <person name="Mayes R."/>
            <person name="Pettett A."/>
            <person name="Rajandream M.A."/>
            <person name="Lyne M."/>
            <person name="Benes V."/>
            <person name="Rechmann S."/>
            <person name="Borkova D."/>
            <person name="Bloecker H."/>
            <person name="Scharfe M."/>
            <person name="Grimm M."/>
            <person name="Loehnert T.-H."/>
            <person name="Dose S."/>
            <person name="de Haan M."/>
            <person name="Maarse A.C."/>
            <person name="Schaefer M."/>
            <person name="Mueller-Auer S."/>
            <person name="Gabel C."/>
            <person name="Fuchs M."/>
            <person name="Fartmann B."/>
            <person name="Granderath K."/>
            <person name="Dauner D."/>
            <person name="Herzl A."/>
            <person name="Neumann S."/>
            <person name="Argiriou A."/>
            <person name="Vitale D."/>
            <person name="Liguori R."/>
            <person name="Piravandi E."/>
            <person name="Massenet O."/>
            <person name="Quigley F."/>
            <person name="Clabauld G."/>
            <person name="Muendlein A."/>
            <person name="Felber R."/>
            <person name="Schnabl S."/>
            <person name="Hiller R."/>
            <person name="Schmidt W."/>
            <person name="Lecharny A."/>
            <person name="Aubourg S."/>
            <person name="Chefdor F."/>
            <person name="Cooke R."/>
            <person name="Berger C."/>
            <person name="Monfort A."/>
            <person name="Casacuberta E."/>
            <person name="Gibbons T."/>
            <person name="Weber N."/>
            <person name="Vandenbol M."/>
            <person name="Bargues M."/>
            <person name="Terol J."/>
            <person name="Torres A."/>
            <person name="Perez-Perez A."/>
            <person name="Purnelle B."/>
            <person name="Bent E."/>
            <person name="Johnson S."/>
            <person name="Tacon D."/>
            <person name="Jesse T."/>
            <person name="Heijnen L."/>
            <person name="Schwarz S."/>
            <person name="Scholler P."/>
            <person name="Heber S."/>
            <person name="Francs P."/>
            <person name="Bielke C."/>
            <person name="Frishman D."/>
            <person name="Haase D."/>
            <person name="Lemcke K."/>
            <person name="Mewes H.-W."/>
            <person name="Stocker S."/>
            <person name="Zaccaria P."/>
            <person name="Bevan M."/>
            <person name="Wilson R.K."/>
            <person name="de la Bastide M."/>
            <person name="Habermann K."/>
            <person name="Parnell L."/>
            <person name="Dedhia N."/>
            <person name="Gnoj L."/>
            <person name="Schutz K."/>
            <person name="Huang E."/>
            <person name="Spiegel L."/>
            <person name="Sekhon M."/>
            <person name="Murray J."/>
            <person name="Sheet P."/>
            <person name="Cordes M."/>
            <person name="Abu-Threideh J."/>
            <person name="Stoneking T."/>
            <person name="Kalicki J."/>
            <person name="Graves T."/>
            <person name="Harmon G."/>
            <person name="Edwards J."/>
            <person name="Latreille P."/>
            <person name="Courtney L."/>
            <person name="Cloud J."/>
            <person name="Abbott A."/>
            <person name="Scott K."/>
            <person name="Johnson D."/>
            <person name="Minx P."/>
            <person name="Bentley D."/>
            <person name="Fulton B."/>
            <person name="Miller N."/>
            <person name="Greco T."/>
            <person name="Kemp K."/>
            <person name="Kramer J."/>
            <person name="Fulton L."/>
            <person name="Mardis E."/>
            <person name="Dante M."/>
            <person name="Pepin K."/>
            <person name="Hillier L.W."/>
            <person name="Nelson J."/>
            <person name="Spieth J."/>
            <person name="Ryan E."/>
            <person name="Andrews S."/>
            <person name="Geisel C."/>
            <person name="Layman D."/>
            <person name="Du H."/>
            <person name="Ali J."/>
            <person name="Berghoff A."/>
            <person name="Jones K."/>
            <person name="Drone K."/>
            <person name="Cotton M."/>
            <person name="Joshu C."/>
            <person name="Antonoiu B."/>
            <person name="Zidanic M."/>
            <person name="Strong C."/>
            <person name="Sun H."/>
            <person name="Lamar B."/>
            <person name="Yordan C."/>
            <person name="Ma P."/>
            <person name="Zhong J."/>
            <person name="Preston R."/>
            <person name="Vil D."/>
            <person name="Shekher M."/>
            <person name="Matero A."/>
            <person name="Shah R."/>
            <person name="Swaby I.K."/>
            <person name="O'Shaughnessy A."/>
            <person name="Rodriguez M."/>
            <person name="Hoffman J."/>
            <person name="Till S."/>
            <person name="Granat S."/>
            <person name="Shohdy N."/>
            <person name="Hasegawa A."/>
            <person name="Hameed A."/>
            <person name="Lodhi M."/>
            <person name="Johnson A."/>
            <person name="Chen E."/>
            <person name="Marra M.A."/>
            <person name="Martienssen R."/>
            <person name="McCombie W.R."/>
        </authorList>
    </citation>
    <scope>NUCLEOTIDE SEQUENCE [LARGE SCALE GENOMIC DNA]</scope>
    <source>
        <strain>cv. Columbia</strain>
    </source>
</reference>
<reference key="2">
    <citation type="journal article" date="2017" name="Plant J.">
        <title>Araport11: a complete reannotation of the Arabidopsis thaliana reference genome.</title>
        <authorList>
            <person name="Cheng C.Y."/>
            <person name="Krishnakumar V."/>
            <person name="Chan A.P."/>
            <person name="Thibaud-Nissen F."/>
            <person name="Schobel S."/>
            <person name="Town C.D."/>
        </authorList>
    </citation>
    <scope>GENOME REANNOTATION</scope>
    <source>
        <strain>cv. Columbia</strain>
    </source>
</reference>
<reference key="3">
    <citation type="journal article" date="2003" name="Science">
        <title>Empirical analysis of transcriptional activity in the Arabidopsis genome.</title>
        <authorList>
            <person name="Yamada K."/>
            <person name="Lim J."/>
            <person name="Dale J.M."/>
            <person name="Chen H."/>
            <person name="Shinn P."/>
            <person name="Palm C.J."/>
            <person name="Southwick A.M."/>
            <person name="Wu H.C."/>
            <person name="Kim C.J."/>
            <person name="Nguyen M."/>
            <person name="Pham P.K."/>
            <person name="Cheuk R.F."/>
            <person name="Karlin-Newmann G."/>
            <person name="Liu S.X."/>
            <person name="Lam B."/>
            <person name="Sakano H."/>
            <person name="Wu T."/>
            <person name="Yu G."/>
            <person name="Miranda M."/>
            <person name="Quach H.L."/>
            <person name="Tripp M."/>
            <person name="Chang C.H."/>
            <person name="Lee J.M."/>
            <person name="Toriumi M.J."/>
            <person name="Chan M.M."/>
            <person name="Tang C.C."/>
            <person name="Onodera C.S."/>
            <person name="Deng J.M."/>
            <person name="Akiyama K."/>
            <person name="Ansari Y."/>
            <person name="Arakawa T."/>
            <person name="Banh J."/>
            <person name="Banno F."/>
            <person name="Bowser L."/>
            <person name="Brooks S.Y."/>
            <person name="Carninci P."/>
            <person name="Chao Q."/>
            <person name="Choy N."/>
            <person name="Enju A."/>
            <person name="Goldsmith A.D."/>
            <person name="Gurjal M."/>
            <person name="Hansen N.F."/>
            <person name="Hayashizaki Y."/>
            <person name="Johnson-Hopson C."/>
            <person name="Hsuan V.W."/>
            <person name="Iida K."/>
            <person name="Karnes M."/>
            <person name="Khan S."/>
            <person name="Koesema E."/>
            <person name="Ishida J."/>
            <person name="Jiang P.X."/>
            <person name="Jones T."/>
            <person name="Kawai J."/>
            <person name="Kamiya A."/>
            <person name="Meyers C."/>
            <person name="Nakajima M."/>
            <person name="Narusaka M."/>
            <person name="Seki M."/>
            <person name="Sakurai T."/>
            <person name="Satou M."/>
            <person name="Tamse R."/>
            <person name="Vaysberg M."/>
            <person name="Wallender E.K."/>
            <person name="Wong C."/>
            <person name="Yamamura Y."/>
            <person name="Yuan S."/>
            <person name="Shinozaki K."/>
            <person name="Davis R.W."/>
            <person name="Theologis A."/>
            <person name="Ecker J.R."/>
        </authorList>
    </citation>
    <scope>NUCLEOTIDE SEQUENCE [LARGE SCALE MRNA]</scope>
    <source>
        <strain>cv. Columbia</strain>
    </source>
</reference>
<reference key="4">
    <citation type="journal article" date="2003" name="J. Biol. Chem.">
        <title>Plant C-N hydrolases and the identification of a plant N-carbamoylputrescine amidohydrolase involved in polyamine biosynthesis.</title>
        <authorList>
            <person name="Piotrowski M."/>
            <person name="Janowitz T."/>
            <person name="Kneifel H."/>
        </authorList>
    </citation>
    <scope>GENE FAMILY</scope>
    <scope>NOMENCLATURE</scope>
</reference>
<reference key="5">
    <citation type="journal article" date="2019" name="Biochem. J.">
        <title>The metabolite repair enzyme Nit1 is a dual-targeted amidase that disposes of damaged glutathione in Arabidopsis.</title>
        <authorList>
            <person name="Niehaus T.D."/>
            <person name="Patterson J.A."/>
            <person name="Alexander D.C."/>
            <person name="Folz J.S."/>
            <person name="Pyc M."/>
            <person name="MacTavish B.S."/>
            <person name="Bruner S.D."/>
            <person name="Mullen R.T."/>
            <person name="Fiehn O."/>
            <person name="Hanson A.D."/>
        </authorList>
    </citation>
    <scope>FUNCTION</scope>
    <scope>CATALYTIC ACTIVITY</scope>
    <scope>BIOPHYSICOCHEMICAL PROPERTIES</scope>
    <scope>SUBCELLULAR LOCATION (ISOFORMS 1 AND 2)</scope>
    <scope>ALTERNATIVE INITIATION</scope>
    <scope>DISRUPTION PHENOTYPE</scope>
    <scope>MUTAGENESIS OF MET-29</scope>
</reference>